<gene>
    <name evidence="1" type="primary">ackA</name>
    <name type="ordered locus">GK2785</name>
</gene>
<name>ACKA_GEOKA</name>
<proteinExistence type="inferred from homology"/>
<protein>
    <recommendedName>
        <fullName evidence="1">Acetate kinase</fullName>
        <ecNumber evidence="1">2.7.2.1</ecNumber>
    </recommendedName>
    <alternativeName>
        <fullName evidence="1">Acetokinase</fullName>
    </alternativeName>
</protein>
<feature type="chain" id="PRO_0000107562" description="Acetate kinase">
    <location>
        <begin position="1"/>
        <end position="396"/>
    </location>
</feature>
<feature type="active site" description="Proton donor/acceptor" evidence="1">
    <location>
        <position position="146"/>
    </location>
</feature>
<feature type="binding site" evidence="1">
    <location>
        <position position="8"/>
    </location>
    <ligand>
        <name>Mg(2+)</name>
        <dbReference type="ChEBI" id="CHEBI:18420"/>
    </ligand>
</feature>
<feature type="binding site" evidence="1">
    <location>
        <position position="15"/>
    </location>
    <ligand>
        <name>ATP</name>
        <dbReference type="ChEBI" id="CHEBI:30616"/>
    </ligand>
</feature>
<feature type="binding site" evidence="1">
    <location>
        <position position="89"/>
    </location>
    <ligand>
        <name>substrate</name>
    </ligand>
</feature>
<feature type="binding site" evidence="1">
    <location>
        <begin position="206"/>
        <end position="210"/>
    </location>
    <ligand>
        <name>ATP</name>
        <dbReference type="ChEBI" id="CHEBI:30616"/>
    </ligand>
</feature>
<feature type="binding site" evidence="1">
    <location>
        <begin position="281"/>
        <end position="283"/>
    </location>
    <ligand>
        <name>ATP</name>
        <dbReference type="ChEBI" id="CHEBI:30616"/>
    </ligand>
</feature>
<feature type="binding site" evidence="1">
    <location>
        <begin position="329"/>
        <end position="333"/>
    </location>
    <ligand>
        <name>ATP</name>
        <dbReference type="ChEBI" id="CHEBI:30616"/>
    </ligand>
</feature>
<feature type="binding site" evidence="1">
    <location>
        <position position="382"/>
    </location>
    <ligand>
        <name>Mg(2+)</name>
        <dbReference type="ChEBI" id="CHEBI:18420"/>
    </ligand>
</feature>
<feature type="site" description="Transition state stabilizer" evidence="1">
    <location>
        <position position="178"/>
    </location>
</feature>
<feature type="site" description="Transition state stabilizer" evidence="1">
    <location>
        <position position="239"/>
    </location>
</feature>
<evidence type="ECO:0000255" key="1">
    <source>
        <dbReference type="HAMAP-Rule" id="MF_00020"/>
    </source>
</evidence>
<dbReference type="EC" id="2.7.2.1" evidence="1"/>
<dbReference type="EMBL" id="BA000043">
    <property type="protein sequence ID" value="BAD77070.1"/>
    <property type="molecule type" value="Genomic_DNA"/>
</dbReference>
<dbReference type="RefSeq" id="WP_011232259.1">
    <property type="nucleotide sequence ID" value="NC_006510.1"/>
</dbReference>
<dbReference type="SMR" id="Q5KW66"/>
<dbReference type="STRING" id="235909.GK2785"/>
<dbReference type="KEGG" id="gka:GK2785"/>
<dbReference type="eggNOG" id="COG0282">
    <property type="taxonomic scope" value="Bacteria"/>
</dbReference>
<dbReference type="HOGENOM" id="CLU_020352_0_1_9"/>
<dbReference type="UniPathway" id="UPA00340">
    <property type="reaction ID" value="UER00458"/>
</dbReference>
<dbReference type="Proteomes" id="UP000001172">
    <property type="component" value="Chromosome"/>
</dbReference>
<dbReference type="GO" id="GO:0005737">
    <property type="term" value="C:cytoplasm"/>
    <property type="evidence" value="ECO:0007669"/>
    <property type="project" value="UniProtKB-SubCell"/>
</dbReference>
<dbReference type="GO" id="GO:0008776">
    <property type="term" value="F:acetate kinase activity"/>
    <property type="evidence" value="ECO:0007669"/>
    <property type="project" value="UniProtKB-UniRule"/>
</dbReference>
<dbReference type="GO" id="GO:0005524">
    <property type="term" value="F:ATP binding"/>
    <property type="evidence" value="ECO:0007669"/>
    <property type="project" value="UniProtKB-KW"/>
</dbReference>
<dbReference type="GO" id="GO:0000287">
    <property type="term" value="F:magnesium ion binding"/>
    <property type="evidence" value="ECO:0007669"/>
    <property type="project" value="UniProtKB-UniRule"/>
</dbReference>
<dbReference type="GO" id="GO:0006083">
    <property type="term" value="P:acetate metabolic process"/>
    <property type="evidence" value="ECO:0007669"/>
    <property type="project" value="TreeGrafter"/>
</dbReference>
<dbReference type="GO" id="GO:0006085">
    <property type="term" value="P:acetyl-CoA biosynthetic process"/>
    <property type="evidence" value="ECO:0007669"/>
    <property type="project" value="UniProtKB-UniRule"/>
</dbReference>
<dbReference type="CDD" id="cd24010">
    <property type="entry name" value="ASKHA_NBD_AcK_PK"/>
    <property type="match status" value="1"/>
</dbReference>
<dbReference type="Gene3D" id="3.30.420.40">
    <property type="match status" value="2"/>
</dbReference>
<dbReference type="HAMAP" id="MF_00020">
    <property type="entry name" value="Acetate_kinase"/>
    <property type="match status" value="1"/>
</dbReference>
<dbReference type="InterPro" id="IPR004372">
    <property type="entry name" value="Ac/propionate_kinase"/>
</dbReference>
<dbReference type="InterPro" id="IPR000890">
    <property type="entry name" value="Aliphatic_acid_kin_short-chain"/>
</dbReference>
<dbReference type="InterPro" id="IPR023865">
    <property type="entry name" value="Aliphatic_acid_kinase_CS"/>
</dbReference>
<dbReference type="InterPro" id="IPR043129">
    <property type="entry name" value="ATPase_NBD"/>
</dbReference>
<dbReference type="NCBIfam" id="TIGR00016">
    <property type="entry name" value="ackA"/>
    <property type="match status" value="1"/>
</dbReference>
<dbReference type="PANTHER" id="PTHR21060">
    <property type="entry name" value="ACETATE KINASE"/>
    <property type="match status" value="1"/>
</dbReference>
<dbReference type="PANTHER" id="PTHR21060:SF15">
    <property type="entry name" value="ACETATE KINASE-RELATED"/>
    <property type="match status" value="1"/>
</dbReference>
<dbReference type="Pfam" id="PF00871">
    <property type="entry name" value="Acetate_kinase"/>
    <property type="match status" value="1"/>
</dbReference>
<dbReference type="PIRSF" id="PIRSF000722">
    <property type="entry name" value="Acetate_prop_kin"/>
    <property type="match status" value="1"/>
</dbReference>
<dbReference type="PRINTS" id="PR00471">
    <property type="entry name" value="ACETATEKNASE"/>
</dbReference>
<dbReference type="SUPFAM" id="SSF53067">
    <property type="entry name" value="Actin-like ATPase domain"/>
    <property type="match status" value="2"/>
</dbReference>
<dbReference type="PROSITE" id="PS01075">
    <property type="entry name" value="ACETATE_KINASE_1"/>
    <property type="match status" value="1"/>
</dbReference>
<dbReference type="PROSITE" id="PS01076">
    <property type="entry name" value="ACETATE_KINASE_2"/>
    <property type="match status" value="1"/>
</dbReference>
<accession>Q5KW66</accession>
<keyword id="KW-0067">ATP-binding</keyword>
<keyword id="KW-0963">Cytoplasm</keyword>
<keyword id="KW-0418">Kinase</keyword>
<keyword id="KW-0460">Magnesium</keyword>
<keyword id="KW-0479">Metal-binding</keyword>
<keyword id="KW-0547">Nucleotide-binding</keyword>
<keyword id="KW-1185">Reference proteome</keyword>
<keyword id="KW-0808">Transferase</keyword>
<reference key="1">
    <citation type="journal article" date="2004" name="Nucleic Acids Res.">
        <title>Thermoadaptation trait revealed by the genome sequence of thermophilic Geobacillus kaustophilus.</title>
        <authorList>
            <person name="Takami H."/>
            <person name="Takaki Y."/>
            <person name="Chee G.-J."/>
            <person name="Nishi S."/>
            <person name="Shimamura S."/>
            <person name="Suzuki H."/>
            <person name="Matsui S."/>
            <person name="Uchiyama I."/>
        </authorList>
    </citation>
    <scope>NUCLEOTIDE SEQUENCE [LARGE SCALE GENOMIC DNA]</scope>
    <source>
        <strain>HTA426</strain>
    </source>
</reference>
<comment type="function">
    <text evidence="1">Catalyzes the formation of acetyl phosphate from acetate and ATP. Can also catalyze the reverse reaction.</text>
</comment>
<comment type="catalytic activity">
    <reaction evidence="1">
        <text>acetate + ATP = acetyl phosphate + ADP</text>
        <dbReference type="Rhea" id="RHEA:11352"/>
        <dbReference type="ChEBI" id="CHEBI:22191"/>
        <dbReference type="ChEBI" id="CHEBI:30089"/>
        <dbReference type="ChEBI" id="CHEBI:30616"/>
        <dbReference type="ChEBI" id="CHEBI:456216"/>
        <dbReference type="EC" id="2.7.2.1"/>
    </reaction>
</comment>
<comment type="cofactor">
    <cofactor evidence="1">
        <name>Mg(2+)</name>
        <dbReference type="ChEBI" id="CHEBI:18420"/>
    </cofactor>
    <cofactor evidence="1">
        <name>Mn(2+)</name>
        <dbReference type="ChEBI" id="CHEBI:29035"/>
    </cofactor>
    <text evidence="1">Mg(2+). Can also accept Mn(2+).</text>
</comment>
<comment type="pathway">
    <text evidence="1">Metabolic intermediate biosynthesis; acetyl-CoA biosynthesis; acetyl-CoA from acetate: step 1/2.</text>
</comment>
<comment type="subunit">
    <text evidence="1">Homodimer.</text>
</comment>
<comment type="subcellular location">
    <subcellularLocation>
        <location evidence="1">Cytoplasm</location>
    </subcellularLocation>
</comment>
<comment type="similarity">
    <text evidence="1">Belongs to the acetokinase family.</text>
</comment>
<organism>
    <name type="scientific">Geobacillus kaustophilus (strain HTA426)</name>
    <dbReference type="NCBI Taxonomy" id="235909"/>
    <lineage>
        <taxon>Bacteria</taxon>
        <taxon>Bacillati</taxon>
        <taxon>Bacillota</taxon>
        <taxon>Bacilli</taxon>
        <taxon>Bacillales</taxon>
        <taxon>Anoxybacillaceae</taxon>
        <taxon>Geobacillus</taxon>
        <taxon>Geobacillus thermoleovorans group</taxon>
    </lineage>
</organism>
<sequence>MAKVLAINAGSSSLKFQLFEMPAETVLTKGVVERIGFDDAIFTIVVNGEKHQEVTAIPDHAAAVKMLLDKLIRYGIIRSFDEIDGIGHRVVHGGEKFSDSVLITEDVIKQIEEVSELAPLHNPANLVGIRAFQEVLPDVPAVAVFDTAFHQTMPEQSFLYSLPYEYYTKFGIRKYGFHGTSHKYVTQRAAELLGRPIEQLRLISCHLGNGASIAAVEGGKSIDTSMGFTPLAGVAMGTRSGNIDPALIPYIMEKTGMTADEVIEVLNKKSGMLGLSGISSDLRDLEKAAAEGNERAELALEVFANRIHKYIGSYAARMCGVDAIIFTAGIGENSEVVRAKVLRGLEFMGVYWDPILNKVRGKEAFISYPHSPVKVLVIPTNEELMIARDVMRLANL</sequence>